<name>OPSG1_CARAU</name>
<accession>P32311</accession>
<reference key="1">
    <citation type="journal article" date="1993" name="Biochemistry">
        <title>Cloning and expression of goldfish opsin sequences.</title>
        <authorList>
            <person name="Johnson R.L."/>
            <person name="Grant K.B."/>
            <person name="Zankel T.C."/>
            <person name="Boehm M.F."/>
            <person name="Merbs S.L."/>
            <person name="Nathans J."/>
            <person name="Nakanishi K."/>
        </authorList>
    </citation>
    <scope>NUCLEOTIDE SEQUENCE [MRNA]</scope>
</reference>
<proteinExistence type="evidence at protein level"/>
<keyword id="KW-0157">Chromophore</keyword>
<keyword id="KW-1015">Disulfide bond</keyword>
<keyword id="KW-0297">G-protein coupled receptor</keyword>
<keyword id="KW-0325">Glycoprotein</keyword>
<keyword id="KW-0472">Membrane</keyword>
<keyword id="KW-0597">Phosphoprotein</keyword>
<keyword id="KW-0600">Photoreceptor protein</keyword>
<keyword id="KW-0675">Receptor</keyword>
<keyword id="KW-1185">Reference proteome</keyword>
<keyword id="KW-0681">Retinal protein</keyword>
<keyword id="KW-0716">Sensory transduction</keyword>
<keyword id="KW-0807">Transducer</keyword>
<keyword id="KW-0812">Transmembrane</keyword>
<keyword id="KW-1133">Transmembrane helix</keyword>
<keyword id="KW-0844">Vision</keyword>
<organism>
    <name type="scientific">Carassius auratus</name>
    <name type="common">Goldfish</name>
    <dbReference type="NCBI Taxonomy" id="7957"/>
    <lineage>
        <taxon>Eukaryota</taxon>
        <taxon>Metazoa</taxon>
        <taxon>Chordata</taxon>
        <taxon>Craniata</taxon>
        <taxon>Vertebrata</taxon>
        <taxon>Euteleostomi</taxon>
        <taxon>Actinopterygii</taxon>
        <taxon>Neopterygii</taxon>
        <taxon>Teleostei</taxon>
        <taxon>Ostariophysi</taxon>
        <taxon>Cypriniformes</taxon>
        <taxon>Cyprinidae</taxon>
        <taxon>Cyprininae</taxon>
        <taxon>Carassius</taxon>
    </lineage>
</organism>
<sequence length="349" mass="38666">MNGTEGKNFYVPMSNRTGLVRSPFEYPQYYLAEPWQFKILALYLFFLMSMGLPINGLTLVVTAQHKKLRQPLNFILVNLAVAGTIMVCFGFTVTFYTAINGYFVLGPTGCAVEGFMATLGGEVALWSLVVLAIERYIVVCKPMGSFKFSSSHAFAGIAFTWVMALACAAPPLFGWSRYIPEGMQCSCGPDYYTLNPDYNNESYVIYMFVCHFILPVAVIFFTYGRLVCTVKAAAAQQQDSASTQKAEREVTKMVILMVFGFLIAWTPYATVAAWIFFNKGADFSAKFMAIPAFFSKSSALYNPVIYVLLNKQFRNCMLTTIFCGKNPLGDDESSTVSTSKTEVSSVSPA</sequence>
<comment type="function">
    <text>Visual pigments are the light-absorbing molecules that mediate vision. They consist of an apoprotein, opsin, covalently linked to cis-retinal.</text>
</comment>
<comment type="biophysicochemical properties">
    <absorption>
        <max>509 nm</max>
    </absorption>
</comment>
<comment type="subcellular location">
    <subcellularLocation>
        <location>Membrane</location>
        <topology>Multi-pass membrane protein</topology>
    </subcellularLocation>
</comment>
<comment type="tissue specificity">
    <text>The color pigments are found in the cone photoreceptor cells.</text>
</comment>
<comment type="PTM">
    <text>Phosphorylated on some or all of the serine and threonine residues present in the C-terminal region.</text>
</comment>
<comment type="similarity">
    <text evidence="3">Belongs to the G-protein coupled receptor 1 family. Opsin subfamily.</text>
</comment>
<evidence type="ECO:0000250" key="1"/>
<evidence type="ECO:0000255" key="2"/>
<evidence type="ECO:0000255" key="3">
    <source>
        <dbReference type="PROSITE-ProRule" id="PRU00521"/>
    </source>
</evidence>
<evidence type="ECO:0000256" key="4">
    <source>
        <dbReference type="SAM" id="MobiDB-lite"/>
    </source>
</evidence>
<protein>
    <recommendedName>
        <fullName>Green-sensitive opsin-1</fullName>
    </recommendedName>
    <alternativeName>
        <fullName>Green cone photoreceptor pigment 1</fullName>
    </alternativeName>
</protein>
<dbReference type="EMBL" id="L11865">
    <property type="protein sequence ID" value="AAA49168.1"/>
    <property type="molecule type" value="mRNA"/>
</dbReference>
<dbReference type="PIR" id="A45229">
    <property type="entry name" value="A45229"/>
</dbReference>
<dbReference type="RefSeq" id="XP_026116811.1">
    <property type="nucleotide sequence ID" value="XM_026261026.1"/>
</dbReference>
<dbReference type="SMR" id="P32311"/>
<dbReference type="GeneID" id="113095523"/>
<dbReference type="OrthoDB" id="5962323at2759"/>
<dbReference type="Proteomes" id="UP000515129">
    <property type="component" value="Chromosome 6"/>
</dbReference>
<dbReference type="GO" id="GO:0016020">
    <property type="term" value="C:membrane"/>
    <property type="evidence" value="ECO:0007669"/>
    <property type="project" value="UniProtKB-SubCell"/>
</dbReference>
<dbReference type="GO" id="GO:0004930">
    <property type="term" value="F:G protein-coupled receptor activity"/>
    <property type="evidence" value="ECO:0007669"/>
    <property type="project" value="UniProtKB-KW"/>
</dbReference>
<dbReference type="GO" id="GO:0009881">
    <property type="term" value="F:photoreceptor activity"/>
    <property type="evidence" value="ECO:0007669"/>
    <property type="project" value="UniProtKB-KW"/>
</dbReference>
<dbReference type="GO" id="GO:0007602">
    <property type="term" value="P:phototransduction"/>
    <property type="evidence" value="ECO:0007669"/>
    <property type="project" value="UniProtKB-KW"/>
</dbReference>
<dbReference type="GO" id="GO:0007601">
    <property type="term" value="P:visual perception"/>
    <property type="evidence" value="ECO:0007669"/>
    <property type="project" value="UniProtKB-KW"/>
</dbReference>
<dbReference type="FunFam" id="1.20.1070.10:FF:000018">
    <property type="entry name" value="Rhodopsin"/>
    <property type="match status" value="1"/>
</dbReference>
<dbReference type="Gene3D" id="1.20.1070.10">
    <property type="entry name" value="Rhodopsin 7-helix transmembrane proteins"/>
    <property type="match status" value="1"/>
</dbReference>
<dbReference type="InterPro" id="IPR050125">
    <property type="entry name" value="GPCR_opsins"/>
</dbReference>
<dbReference type="InterPro" id="IPR000276">
    <property type="entry name" value="GPCR_Rhodpsn"/>
</dbReference>
<dbReference type="InterPro" id="IPR017452">
    <property type="entry name" value="GPCR_Rhodpsn_7TM"/>
</dbReference>
<dbReference type="InterPro" id="IPR001760">
    <property type="entry name" value="Opsin"/>
</dbReference>
<dbReference type="InterPro" id="IPR027430">
    <property type="entry name" value="Retinal_BS"/>
</dbReference>
<dbReference type="InterPro" id="IPR000732">
    <property type="entry name" value="Rhodopsin"/>
</dbReference>
<dbReference type="InterPro" id="IPR019477">
    <property type="entry name" value="Rhodopsin_N"/>
</dbReference>
<dbReference type="PANTHER" id="PTHR24240">
    <property type="entry name" value="OPSIN"/>
    <property type="match status" value="1"/>
</dbReference>
<dbReference type="Pfam" id="PF00001">
    <property type="entry name" value="7tm_1"/>
    <property type="match status" value="1"/>
</dbReference>
<dbReference type="Pfam" id="PF10413">
    <property type="entry name" value="Rhodopsin_N"/>
    <property type="match status" value="1"/>
</dbReference>
<dbReference type="PRINTS" id="PR00237">
    <property type="entry name" value="GPCRRHODOPSN"/>
</dbReference>
<dbReference type="PRINTS" id="PR00238">
    <property type="entry name" value="OPSIN"/>
</dbReference>
<dbReference type="PRINTS" id="PR00579">
    <property type="entry name" value="RHODOPSIN"/>
</dbReference>
<dbReference type="SUPFAM" id="SSF81321">
    <property type="entry name" value="Family A G protein-coupled receptor-like"/>
    <property type="match status" value="1"/>
</dbReference>
<dbReference type="PROSITE" id="PS00237">
    <property type="entry name" value="G_PROTEIN_RECEP_F1_1"/>
    <property type="match status" value="1"/>
</dbReference>
<dbReference type="PROSITE" id="PS50262">
    <property type="entry name" value="G_PROTEIN_RECEP_F1_2"/>
    <property type="match status" value="1"/>
</dbReference>
<dbReference type="PROSITE" id="PS00238">
    <property type="entry name" value="OPSIN"/>
    <property type="match status" value="1"/>
</dbReference>
<feature type="chain" id="PRO_0000197779" description="Green-sensitive opsin-1">
    <location>
        <begin position="1"/>
        <end position="349"/>
    </location>
</feature>
<feature type="topological domain" description="Extracellular" evidence="2">
    <location>
        <begin position="1"/>
        <end position="36"/>
    </location>
</feature>
<feature type="transmembrane region" description="Helical; Name=1" evidence="2">
    <location>
        <begin position="37"/>
        <end position="61"/>
    </location>
</feature>
<feature type="topological domain" description="Cytoplasmic" evidence="2">
    <location>
        <begin position="62"/>
        <end position="73"/>
    </location>
</feature>
<feature type="transmembrane region" description="Helical; Name=2" evidence="2">
    <location>
        <begin position="74"/>
        <end position="99"/>
    </location>
</feature>
<feature type="topological domain" description="Extracellular" evidence="2">
    <location>
        <begin position="100"/>
        <end position="113"/>
    </location>
</feature>
<feature type="transmembrane region" description="Helical; Name=3" evidence="2">
    <location>
        <begin position="114"/>
        <end position="133"/>
    </location>
</feature>
<feature type="topological domain" description="Cytoplasmic" evidence="2">
    <location>
        <begin position="134"/>
        <end position="152"/>
    </location>
</feature>
<feature type="transmembrane region" description="Helical; Name=4" evidence="2">
    <location>
        <begin position="153"/>
        <end position="176"/>
    </location>
</feature>
<feature type="topological domain" description="Extracellular" evidence="2">
    <location>
        <begin position="177"/>
        <end position="202"/>
    </location>
</feature>
<feature type="transmembrane region" description="Helical; Name=5" evidence="2">
    <location>
        <begin position="203"/>
        <end position="230"/>
    </location>
</feature>
<feature type="topological domain" description="Cytoplasmic" evidence="2">
    <location>
        <begin position="231"/>
        <end position="252"/>
    </location>
</feature>
<feature type="transmembrane region" description="Helical; Name=6" evidence="2">
    <location>
        <begin position="253"/>
        <end position="276"/>
    </location>
</feature>
<feature type="topological domain" description="Extracellular" evidence="2">
    <location>
        <begin position="277"/>
        <end position="284"/>
    </location>
</feature>
<feature type="transmembrane region" description="Helical; Name=7" evidence="2">
    <location>
        <begin position="285"/>
        <end position="309"/>
    </location>
</feature>
<feature type="topological domain" description="Cytoplasmic" evidence="2">
    <location>
        <begin position="310"/>
        <end position="349"/>
    </location>
</feature>
<feature type="region of interest" description="Disordered" evidence="4">
    <location>
        <begin position="329"/>
        <end position="349"/>
    </location>
</feature>
<feature type="compositionally biased region" description="Low complexity" evidence="4">
    <location>
        <begin position="334"/>
        <end position="349"/>
    </location>
</feature>
<feature type="modified residue" description="N6-(retinylidene)lysine" evidence="1">
    <location>
        <position position="296"/>
    </location>
</feature>
<feature type="glycosylation site" description="N-linked (GlcNAc...) asparagine" evidence="2">
    <location>
        <position position="2"/>
    </location>
</feature>
<feature type="glycosylation site" description="N-linked (GlcNAc...) asparagine" evidence="2">
    <location>
        <position position="15"/>
    </location>
</feature>
<feature type="disulfide bond" evidence="3">
    <location>
        <begin position="110"/>
        <end position="187"/>
    </location>
</feature>